<comment type="function">
    <text evidence="3 5 7 9 10 11">Ligand for members of the frizzled family of seven transmembrane receptors (PubMed:17117926). Can activate or inhibit canonical Wnt signaling, depending on receptor context (PubMed:16602827). In the presence of FZD4, activates beta-catenin signaling. In the presence of ROR2, inhibits the canonical Wnt pathway by promoting beta-catenin degradation through a GSK3-independent pathway which involves down-regulation of beta-catenin-induced reporter gene expression (PubMed:16602827). Suppression of the canonical pathway allows chondrogenesis to occur and inhibits tumor formation. Stimulates cell migration (PubMed:17117926). Decreases proliferation, migration, invasiveness and clonogenicity of carcinoma cells and may act as a tumor suppressor. Mediates motility of melanoma cells (By similarity). Required during embryogenesis for extension of the primary anterior-posterior axis and for outgrowth of limbs and the genital tubercle (PubMed:10021340). Inhibits type II collagen expression in chondrocytes (By similarity).</text>
</comment>
<comment type="subunit">
    <text evidence="3 8 12 13 14">Forms a soluble 1:1 complex with AFM; this prevents oligomerization and is required for prolonged biological activity. The complex with AFM may represent the physiological form in body fluids (By similarity). Homooligomer; disulfide-linked, leading to inactivation (PubMed:22726442). Interacts with PORCN (PubMed:10866835). Interacts with WLS (PubMed:19841259). Interacts with glypican GCP3 (By similarity). Interacts with PKD1 (via extracellular domain) (PubMed:27214281). Interacts with TMEM67 (By similarity).</text>
</comment>
<comment type="interaction">
    <interactant intactId="EBI-1570983">
        <id>P22725</id>
    </interactant>
    <interactant intactId="EBI-1570828">
        <id>O35082</id>
        <label>Kl</label>
    </interactant>
    <organismsDiffer>false</organismsDiffer>
    <experiments>2</experiments>
</comment>
<comment type="interaction">
    <interactant intactId="EBI-1570983">
        <id>P22725</id>
    </interactant>
    <interactant intactId="EBI-3922719">
        <id>Q9Y5W5</id>
        <label>WIF1</label>
    </interactant>
    <organismsDiffer>true</organismsDiffer>
    <experiments>7</experiments>
</comment>
<comment type="subcellular location">
    <subcellularLocation>
        <location evidence="16">Secreted</location>
        <location evidence="16">Extracellular space</location>
        <location evidence="16">Extracellular matrix</location>
    </subcellularLocation>
    <subcellularLocation>
        <location evidence="11">Secreted</location>
    </subcellularLocation>
</comment>
<comment type="alternative products">
    <event type="alternative splicing"/>
    <isoform>
        <id>P22725-1</id>
        <name>1</name>
        <sequence type="displayed"/>
    </isoform>
    <isoform>
        <id>P22725-2</id>
        <name>2</name>
        <sequence type="described" ref="VSP_035595"/>
    </isoform>
</comment>
<comment type="tissue specificity">
    <text evidence="7">Expressed in a gradient at the caudal end of the embryo during gastrulation and later in the distal-most aspect of several structures that extend from the body such as the limbs and genital tubercle.</text>
</comment>
<comment type="PTM">
    <text evidence="11">Glycosylation is necessary for secretion but not for activity.</text>
</comment>
<comment type="PTM">
    <text evidence="1 4">Palmitoleoylation is required for efficient binding to frizzled receptors. Depalmitoleoylation leads to Wnt signaling pathway inhibition.</text>
</comment>
<comment type="PTM">
    <text evidence="13">Proteolytic processing by TIKI1 and TIKI2 promotes oxidation and formation of large disulfide-bond oligomers, leading to inactivation of WNT5A.</text>
</comment>
<comment type="disruption phenotype">
    <text evidence="7 9">Mice display perinatal lethality and display gross morphological defects in outgrowing tissues. They are truncated caudally, displaying loss of the tail and a significant shortening of the anterior-posterior axis. The shape of the head is abnormal with truncated snout, mandible and tongue and reduced outgrowth of the external ear. Fore- and hindlimbs lack digits, the genital tubercle is missing and chondrocyte differentiation is inhibited.</text>
</comment>
<comment type="similarity">
    <text evidence="16">Belongs to the Wnt family.</text>
</comment>
<comment type="caution">
    <text evidence="16">A palmitoylation site was proposed at Cys-104, but it was later shown that this cysteine is engaged in a disulfide bond.</text>
</comment>
<feature type="signal peptide" evidence="6">
    <location>
        <begin position="1"/>
        <end position="37"/>
    </location>
</feature>
<feature type="propeptide" id="PRO_0000352797" evidence="10">
    <location>
        <begin position="38"/>
        <end position="61"/>
    </location>
</feature>
<feature type="chain" id="PRO_0000041428" description="Protein Wnt-5a">
    <location>
        <begin position="62"/>
        <end position="380"/>
    </location>
</feature>
<feature type="lipid moiety-binding region" description="O-palmitoleoyl serine; by PORCN" evidence="4">
    <location>
        <position position="244"/>
    </location>
</feature>
<feature type="glycosylation site" description="N-linked (GlcNAc...) asparagine" evidence="11">
    <location>
        <position position="114"/>
    </location>
</feature>
<feature type="glycosylation site" description="N-linked (GlcNAc...) asparagine" evidence="11">
    <location>
        <position position="120"/>
    </location>
</feature>
<feature type="glycosylation site" description="N-linked (GlcNAc...) asparagine" evidence="11">
    <location>
        <position position="312"/>
    </location>
</feature>
<feature type="glycosylation site" description="N-linked (GlcNAc...) asparagine" evidence="11">
    <location>
        <position position="326"/>
    </location>
</feature>
<feature type="disulfide bond" evidence="2">
    <location>
        <begin position="104"/>
        <end position="115"/>
    </location>
</feature>
<feature type="disulfide bond" evidence="2">
    <location>
        <begin position="154"/>
        <end position="162"/>
    </location>
</feature>
<feature type="disulfide bond" evidence="2">
    <location>
        <begin position="164"/>
        <end position="182"/>
    </location>
</feature>
<feature type="disulfide bond" evidence="2">
    <location>
        <begin position="238"/>
        <end position="252"/>
    </location>
</feature>
<feature type="disulfide bond" evidence="2">
    <location>
        <begin position="240"/>
        <end position="247"/>
    </location>
</feature>
<feature type="disulfide bond" evidence="2">
    <location>
        <begin position="309"/>
        <end position="340"/>
    </location>
</feature>
<feature type="disulfide bond" evidence="2">
    <location>
        <begin position="325"/>
        <end position="335"/>
    </location>
</feature>
<feature type="disulfide bond" evidence="2">
    <location>
        <begin position="339"/>
        <end position="379"/>
    </location>
</feature>
<feature type="disulfide bond" evidence="2">
    <location>
        <begin position="355"/>
        <end position="370"/>
    </location>
</feature>
<feature type="disulfide bond" evidence="2">
    <location>
        <begin position="357"/>
        <end position="367"/>
    </location>
</feature>
<feature type="disulfide bond" evidence="2">
    <location>
        <begin position="362"/>
        <end position="363"/>
    </location>
</feature>
<feature type="splice variant" id="VSP_035595" description="In isoform 2." evidence="15">
    <location>
        <begin position="1"/>
        <end position="20"/>
    </location>
</feature>
<feature type="mutagenesis site" description="No effect on secretion." evidence="11">
    <original>C</original>
    <variation>A</variation>
    <location>
        <position position="104"/>
    </location>
</feature>
<feature type="mutagenesis site" description="Abolishes glycosylation; when associated with Q-120, Q-312 and Q-326." evidence="11">
    <original>N</original>
    <variation>Q</variation>
    <location>
        <position position="114"/>
    </location>
</feature>
<feature type="mutagenesis site" description="Abolishes glycosylation; when associated with Q-114, Q-312 and Q-326." evidence="11">
    <original>N</original>
    <variation>Q</variation>
    <location>
        <position position="120"/>
    </location>
</feature>
<feature type="mutagenesis site" description="Abolishes glycosylation; when associated with Q-114, Q-120 and Q-326." evidence="11">
    <original>N</original>
    <variation>Q</variation>
    <location>
        <position position="312"/>
    </location>
</feature>
<feature type="mutagenesis site" description="Abolishes glycosylation; when associated with Q-114, Q-120 and Q-312." evidence="11">
    <original>N</original>
    <variation>Q</variation>
    <location>
        <position position="326"/>
    </location>
</feature>
<feature type="sequence conflict" description="In Ref. 1; AAA40567." evidence="16" ref="1">
    <location>
        <position position="168"/>
    </location>
</feature>
<feature type="sequence conflict" description="In Ref. 1; AAA40567." evidence="16" ref="1">
    <original>YR</original>
    <variation>HP</variation>
    <location>
        <begin position="190"/>
        <end position="191"/>
    </location>
</feature>
<feature type="sequence conflict" description="In Ref. 2; BAC27430." evidence="16" ref="2">
    <original>F</original>
    <variation>L</variation>
    <location>
        <position position="377"/>
    </location>
</feature>
<accession>P22725</accession>
<accession>Q8BM17</accession>
<accession>Q8BMF9</accession>
<accession>Q8VCV6</accession>
<reference key="1">
    <citation type="journal article" date="1990" name="Genes Dev.">
        <title>Expression of multiple novel Wnt-1/int-1-related genes during fetal and adult mouse development.</title>
        <authorList>
            <person name="Gavin B.J."/>
            <person name="McMahon J.A."/>
            <person name="McMahon A.P."/>
        </authorList>
    </citation>
    <scope>NUCLEOTIDE SEQUENCE [MRNA] (ISOFORM 1)</scope>
    <source>
        <tissue>Embryo</tissue>
    </source>
</reference>
<reference key="2">
    <citation type="journal article" date="2005" name="Science">
        <title>The transcriptional landscape of the mammalian genome.</title>
        <authorList>
            <person name="Carninci P."/>
            <person name="Kasukawa T."/>
            <person name="Katayama S."/>
            <person name="Gough J."/>
            <person name="Frith M.C."/>
            <person name="Maeda N."/>
            <person name="Oyama R."/>
            <person name="Ravasi T."/>
            <person name="Lenhard B."/>
            <person name="Wells C."/>
            <person name="Kodzius R."/>
            <person name="Shimokawa K."/>
            <person name="Bajic V.B."/>
            <person name="Brenner S.E."/>
            <person name="Batalov S."/>
            <person name="Forrest A.R."/>
            <person name="Zavolan M."/>
            <person name="Davis M.J."/>
            <person name="Wilming L.G."/>
            <person name="Aidinis V."/>
            <person name="Allen J.E."/>
            <person name="Ambesi-Impiombato A."/>
            <person name="Apweiler R."/>
            <person name="Aturaliya R.N."/>
            <person name="Bailey T.L."/>
            <person name="Bansal M."/>
            <person name="Baxter L."/>
            <person name="Beisel K.W."/>
            <person name="Bersano T."/>
            <person name="Bono H."/>
            <person name="Chalk A.M."/>
            <person name="Chiu K.P."/>
            <person name="Choudhary V."/>
            <person name="Christoffels A."/>
            <person name="Clutterbuck D.R."/>
            <person name="Crowe M.L."/>
            <person name="Dalla E."/>
            <person name="Dalrymple B.P."/>
            <person name="de Bono B."/>
            <person name="Della Gatta G."/>
            <person name="di Bernardo D."/>
            <person name="Down T."/>
            <person name="Engstrom P."/>
            <person name="Fagiolini M."/>
            <person name="Faulkner G."/>
            <person name="Fletcher C.F."/>
            <person name="Fukushima T."/>
            <person name="Furuno M."/>
            <person name="Futaki S."/>
            <person name="Gariboldi M."/>
            <person name="Georgii-Hemming P."/>
            <person name="Gingeras T.R."/>
            <person name="Gojobori T."/>
            <person name="Green R.E."/>
            <person name="Gustincich S."/>
            <person name="Harbers M."/>
            <person name="Hayashi Y."/>
            <person name="Hensch T.K."/>
            <person name="Hirokawa N."/>
            <person name="Hill D."/>
            <person name="Huminiecki L."/>
            <person name="Iacono M."/>
            <person name="Ikeo K."/>
            <person name="Iwama A."/>
            <person name="Ishikawa T."/>
            <person name="Jakt M."/>
            <person name="Kanapin A."/>
            <person name="Katoh M."/>
            <person name="Kawasawa Y."/>
            <person name="Kelso J."/>
            <person name="Kitamura H."/>
            <person name="Kitano H."/>
            <person name="Kollias G."/>
            <person name="Krishnan S.P."/>
            <person name="Kruger A."/>
            <person name="Kummerfeld S.K."/>
            <person name="Kurochkin I.V."/>
            <person name="Lareau L.F."/>
            <person name="Lazarevic D."/>
            <person name="Lipovich L."/>
            <person name="Liu J."/>
            <person name="Liuni S."/>
            <person name="McWilliam S."/>
            <person name="Madan Babu M."/>
            <person name="Madera M."/>
            <person name="Marchionni L."/>
            <person name="Matsuda H."/>
            <person name="Matsuzawa S."/>
            <person name="Miki H."/>
            <person name="Mignone F."/>
            <person name="Miyake S."/>
            <person name="Morris K."/>
            <person name="Mottagui-Tabar S."/>
            <person name="Mulder N."/>
            <person name="Nakano N."/>
            <person name="Nakauchi H."/>
            <person name="Ng P."/>
            <person name="Nilsson R."/>
            <person name="Nishiguchi S."/>
            <person name="Nishikawa S."/>
            <person name="Nori F."/>
            <person name="Ohara O."/>
            <person name="Okazaki Y."/>
            <person name="Orlando V."/>
            <person name="Pang K.C."/>
            <person name="Pavan W.J."/>
            <person name="Pavesi G."/>
            <person name="Pesole G."/>
            <person name="Petrovsky N."/>
            <person name="Piazza S."/>
            <person name="Reed J."/>
            <person name="Reid J.F."/>
            <person name="Ring B.Z."/>
            <person name="Ringwald M."/>
            <person name="Rost B."/>
            <person name="Ruan Y."/>
            <person name="Salzberg S.L."/>
            <person name="Sandelin A."/>
            <person name="Schneider C."/>
            <person name="Schoenbach C."/>
            <person name="Sekiguchi K."/>
            <person name="Semple C.A."/>
            <person name="Seno S."/>
            <person name="Sessa L."/>
            <person name="Sheng Y."/>
            <person name="Shibata Y."/>
            <person name="Shimada H."/>
            <person name="Shimada K."/>
            <person name="Silva D."/>
            <person name="Sinclair B."/>
            <person name="Sperling S."/>
            <person name="Stupka E."/>
            <person name="Sugiura K."/>
            <person name="Sultana R."/>
            <person name="Takenaka Y."/>
            <person name="Taki K."/>
            <person name="Tammoja K."/>
            <person name="Tan S.L."/>
            <person name="Tang S."/>
            <person name="Taylor M.S."/>
            <person name="Tegner J."/>
            <person name="Teichmann S.A."/>
            <person name="Ueda H.R."/>
            <person name="van Nimwegen E."/>
            <person name="Verardo R."/>
            <person name="Wei C.L."/>
            <person name="Yagi K."/>
            <person name="Yamanishi H."/>
            <person name="Zabarovsky E."/>
            <person name="Zhu S."/>
            <person name="Zimmer A."/>
            <person name="Hide W."/>
            <person name="Bult C."/>
            <person name="Grimmond S.M."/>
            <person name="Teasdale R.D."/>
            <person name="Liu E.T."/>
            <person name="Brusic V."/>
            <person name="Quackenbush J."/>
            <person name="Wahlestedt C."/>
            <person name="Mattick J.S."/>
            <person name="Hume D.A."/>
            <person name="Kai C."/>
            <person name="Sasaki D."/>
            <person name="Tomaru Y."/>
            <person name="Fukuda S."/>
            <person name="Kanamori-Katayama M."/>
            <person name="Suzuki M."/>
            <person name="Aoki J."/>
            <person name="Arakawa T."/>
            <person name="Iida J."/>
            <person name="Imamura K."/>
            <person name="Itoh M."/>
            <person name="Kato T."/>
            <person name="Kawaji H."/>
            <person name="Kawagashira N."/>
            <person name="Kawashima T."/>
            <person name="Kojima M."/>
            <person name="Kondo S."/>
            <person name="Konno H."/>
            <person name="Nakano K."/>
            <person name="Ninomiya N."/>
            <person name="Nishio T."/>
            <person name="Okada M."/>
            <person name="Plessy C."/>
            <person name="Shibata K."/>
            <person name="Shiraki T."/>
            <person name="Suzuki S."/>
            <person name="Tagami M."/>
            <person name="Waki K."/>
            <person name="Watahiki A."/>
            <person name="Okamura-Oho Y."/>
            <person name="Suzuki H."/>
            <person name="Kawai J."/>
            <person name="Hayashizaki Y."/>
        </authorList>
    </citation>
    <scope>NUCLEOTIDE SEQUENCE [LARGE SCALE MRNA] (ISOFORMS 1 AND 2)</scope>
    <source>
        <strain>C57BL/6J</strain>
        <tissue>Testis</tissue>
        <tissue>Vagina</tissue>
    </source>
</reference>
<reference key="3">
    <citation type="journal article" date="2009" name="PLoS Biol.">
        <title>Lineage-specific biology revealed by a finished genome assembly of the mouse.</title>
        <authorList>
            <person name="Church D.M."/>
            <person name="Goodstadt L."/>
            <person name="Hillier L.W."/>
            <person name="Zody M.C."/>
            <person name="Goldstein S."/>
            <person name="She X."/>
            <person name="Bult C.J."/>
            <person name="Agarwala R."/>
            <person name="Cherry J.L."/>
            <person name="DiCuccio M."/>
            <person name="Hlavina W."/>
            <person name="Kapustin Y."/>
            <person name="Meric P."/>
            <person name="Maglott D."/>
            <person name="Birtle Z."/>
            <person name="Marques A.C."/>
            <person name="Graves T."/>
            <person name="Zhou S."/>
            <person name="Teague B."/>
            <person name="Potamousis K."/>
            <person name="Churas C."/>
            <person name="Place M."/>
            <person name="Herschleb J."/>
            <person name="Runnheim R."/>
            <person name="Forrest D."/>
            <person name="Amos-Landgraf J."/>
            <person name="Schwartz D.C."/>
            <person name="Cheng Z."/>
            <person name="Lindblad-Toh K."/>
            <person name="Eichler E.E."/>
            <person name="Ponting C.P."/>
        </authorList>
    </citation>
    <scope>NUCLEOTIDE SEQUENCE [LARGE SCALE GENOMIC DNA]</scope>
    <source>
        <strain>C57BL/6J</strain>
    </source>
</reference>
<reference key="4">
    <citation type="journal article" date="2004" name="Genome Res.">
        <title>The status, quality, and expansion of the NIH full-length cDNA project: the Mammalian Gene Collection (MGC).</title>
        <authorList>
            <consortium name="The MGC Project Team"/>
        </authorList>
    </citation>
    <scope>NUCLEOTIDE SEQUENCE [LARGE SCALE MRNA] (ISOFORM 1)</scope>
    <source>
        <tissue>Mammary tumor</tissue>
    </source>
</reference>
<reference key="5">
    <citation type="journal article" date="2006" name="PLoS Biol.">
        <title>Purified Wnt5a protein activates or inhibits beta-catenin-TCF signaling depending on receptor context.</title>
        <authorList>
            <person name="Mikels A.J."/>
            <person name="Nusse R."/>
        </authorList>
    </citation>
    <scope>PROTEIN SEQUENCE OF 62-82</scope>
    <scope>FUNCTION</scope>
</reference>
<reference key="6">
    <citation type="journal article" date="1999" name="Development">
        <title>A Wnt5a pathway underlies outgrowth of multiple structures in the vertebrate embryo.</title>
        <authorList>
            <person name="Yamaguchi T.P."/>
            <person name="Bradley A."/>
            <person name="McMahon A.P."/>
            <person name="Jones S."/>
        </authorList>
    </citation>
    <scope>FUNCTION</scope>
    <scope>TISSUE SPECIFICITY</scope>
    <scope>DISRUPTION PHENOTYPE</scope>
</reference>
<reference key="7">
    <citation type="journal article" date="2000" name="Eur. J. Biochem.">
        <title>The evolutionarily conserved porcupine gene family is involved in the processing of the Wnt family.</title>
        <authorList>
            <person name="Tanaka K."/>
            <person name="Okabayashi H."/>
            <person name="Asashima M."/>
            <person name="Perrimon N."/>
            <person name="Kadowaki T."/>
        </authorList>
    </citation>
    <scope>INTERACTION WITH PORCN</scope>
</reference>
<reference key="8">
    <citation type="journal article" date="2003" name="J. Cell Biol.">
        <title>Wnt-5a inhibits the canonical Wnt pathway by promoting GSK-3-independent beta-catenin degradation.</title>
        <authorList>
            <person name="Topol L."/>
            <person name="Jiang X."/>
            <person name="Choi H."/>
            <person name="Garrett-Beal L."/>
            <person name="Carolan P.J."/>
            <person name="Yang Y."/>
        </authorList>
    </citation>
    <scope>FUNCTION</scope>
    <scope>DISRUPTION PHENOTYPE</scope>
</reference>
<reference key="9">
    <citation type="journal article" date="2007" name="Biochem. J.">
        <title>Post-translational palmitoylation and glycosylation of Wnt-5a are necessary for its signalling.</title>
        <authorList>
            <person name="Kurayoshi M."/>
            <person name="Yamamoto H."/>
            <person name="Izumi S."/>
            <person name="Kikuchi A."/>
        </authorList>
    </citation>
    <scope>FUNCTION</scope>
    <scope>SUBCELLULAR LOCATION</scope>
    <scope>PRELIMINARY CYSTEINE PALMITOYLATION</scope>
    <scope>GLYCOSYLATION AT ASN-114; ASN-120; ASN-312 AND ASN-326</scope>
    <scope>MUTAGENESIS OF CYS-104; ASN-114; ASN-120; ASN-312 AND ASN-326</scope>
</reference>
<reference key="10">
    <citation type="journal article" date="2009" name="Proc. Natl. Acad. Sci. U.S.A.">
        <title>Reciprocal regulation of Wnt and Gpr177/mouse Wntless is required for embryonic axis formation.</title>
        <authorList>
            <person name="Fu J."/>
            <person name="Jiang M."/>
            <person name="Mirando A.J."/>
            <person name="Yu H.-M."/>
            <person name="Hsu W."/>
        </authorList>
    </citation>
    <scope>INTERACTION WITH WLS</scope>
</reference>
<reference key="11">
    <citation type="journal article" date="2012" name="Cell">
        <title>Tiki1 is required for head formation via Wnt cleavage-oxidation and inactivation.</title>
        <authorList>
            <person name="Zhang X."/>
            <person name="Abreu J.G."/>
            <person name="Yokota C."/>
            <person name="Macdonald B.T."/>
            <person name="Singh S."/>
            <person name="Coburn K.L."/>
            <person name="Cheong S.M."/>
            <person name="Zhang M.M."/>
            <person name="Ye Q.Z."/>
            <person name="Hang H.C."/>
            <person name="Steen H."/>
            <person name="He X."/>
        </authorList>
    </citation>
    <scope>PROTEOLYTIC PROCESSING BY TIKI1 AND TIKI2</scope>
    <scope>DISULFIDE BONDS</scope>
    <scope>SUBUNIT</scope>
</reference>
<reference key="12">
    <citation type="journal article" date="2016" name="Nat. Cell Biol.">
        <title>The polycystin complex mediates Wnt/Ca(2+) signalling.</title>
        <authorList>
            <person name="Kim S."/>
            <person name="Nie H."/>
            <person name="Nesin V."/>
            <person name="Tran U."/>
            <person name="Outeda P."/>
            <person name="Bai C.X."/>
            <person name="Keeling J."/>
            <person name="Maskey D."/>
            <person name="Watnick T."/>
            <person name="Wessely O."/>
            <person name="Tsiokas L."/>
        </authorList>
    </citation>
    <scope>INTERACTION WITH PKD1</scope>
</reference>
<protein>
    <recommendedName>
        <fullName>Protein Wnt-5a</fullName>
    </recommendedName>
</protein>
<dbReference type="EMBL" id="M89798">
    <property type="protein sequence ID" value="AAA40567.1"/>
    <property type="molecule type" value="mRNA"/>
</dbReference>
<dbReference type="EMBL" id="AK031512">
    <property type="protein sequence ID" value="BAC27430.1"/>
    <property type="molecule type" value="mRNA"/>
</dbReference>
<dbReference type="EMBL" id="AK031597">
    <property type="protein sequence ID" value="BAC27468.1"/>
    <property type="molecule type" value="mRNA"/>
</dbReference>
<dbReference type="EMBL" id="AK036824">
    <property type="protein sequence ID" value="BAC29593.1"/>
    <property type="molecule type" value="mRNA"/>
</dbReference>
<dbReference type="EMBL" id="CT025649">
    <property type="status" value="NOT_ANNOTATED_CDS"/>
    <property type="molecule type" value="Genomic_DNA"/>
</dbReference>
<dbReference type="EMBL" id="BC018425">
    <property type="protein sequence ID" value="AAH18425.1"/>
    <property type="molecule type" value="mRNA"/>
</dbReference>
<dbReference type="CCDS" id="CCDS26888.1">
    <molecule id="P22725-1"/>
</dbReference>
<dbReference type="CCDS" id="CCDS56946.1">
    <molecule id="P22725-2"/>
</dbReference>
<dbReference type="PIR" id="D36470">
    <property type="entry name" value="D36470"/>
</dbReference>
<dbReference type="RefSeq" id="NP_001243153.1">
    <molecule id="P22725-2"/>
    <property type="nucleotide sequence ID" value="NM_001256224.2"/>
</dbReference>
<dbReference type="RefSeq" id="NP_033550.2">
    <molecule id="P22725-1"/>
    <property type="nucleotide sequence ID" value="NM_009524.3"/>
</dbReference>
<dbReference type="RefSeq" id="XP_006518987.1">
    <molecule id="P22725-2"/>
    <property type="nucleotide sequence ID" value="XM_006518924.4"/>
</dbReference>
<dbReference type="RefSeq" id="XP_006518988.1">
    <property type="nucleotide sequence ID" value="XM_006518925.3"/>
</dbReference>
<dbReference type="RefSeq" id="XP_030103639.1">
    <molecule id="P22725-2"/>
    <property type="nucleotide sequence ID" value="XM_030247779.2"/>
</dbReference>
<dbReference type="SMR" id="P22725"/>
<dbReference type="BioGRID" id="204577">
    <property type="interactions" value="7"/>
</dbReference>
<dbReference type="CORUM" id="P22725"/>
<dbReference type="DIP" id="DIP-39893N"/>
<dbReference type="FunCoup" id="P22725">
    <property type="interactions" value="443"/>
</dbReference>
<dbReference type="IntAct" id="P22725">
    <property type="interactions" value="8"/>
</dbReference>
<dbReference type="MINT" id="P22725"/>
<dbReference type="STRING" id="10090.ENSMUSP00000064878"/>
<dbReference type="GlyCosmos" id="P22725">
    <property type="glycosylation" value="4 sites, No reported glycans"/>
</dbReference>
<dbReference type="GlyGen" id="P22725">
    <property type="glycosylation" value="4 sites, 2 N-linked glycans (2 sites)"/>
</dbReference>
<dbReference type="iPTMnet" id="P22725"/>
<dbReference type="PhosphoSitePlus" id="P22725"/>
<dbReference type="SwissPalm" id="P22725"/>
<dbReference type="PaxDb" id="10090-ENSMUSP00000064878"/>
<dbReference type="PeptideAtlas" id="P22725"/>
<dbReference type="ProteomicsDB" id="299772">
    <molecule id="P22725-1"/>
</dbReference>
<dbReference type="ProteomicsDB" id="299773">
    <molecule id="P22725-2"/>
</dbReference>
<dbReference type="Antibodypedia" id="31456">
    <property type="antibodies" value="564 antibodies from 41 providers"/>
</dbReference>
<dbReference type="DNASU" id="22418"/>
<dbReference type="Ensembl" id="ENSMUST00000063465.12">
    <molecule id="P22725-1"/>
    <property type="protein sequence ID" value="ENSMUSP00000064878.5"/>
    <property type="gene ID" value="ENSMUSG00000021994.16"/>
</dbReference>
<dbReference type="Ensembl" id="ENSMUST00000112272.2">
    <molecule id="P22725-2"/>
    <property type="protein sequence ID" value="ENSMUSP00000107891.2"/>
    <property type="gene ID" value="ENSMUSG00000021994.16"/>
</dbReference>
<dbReference type="GeneID" id="22418"/>
<dbReference type="KEGG" id="mmu:22418"/>
<dbReference type="UCSC" id="uc007sug.2">
    <molecule id="P22725-1"/>
    <property type="organism name" value="mouse"/>
</dbReference>
<dbReference type="AGR" id="MGI:98958"/>
<dbReference type="CTD" id="7474"/>
<dbReference type="MGI" id="MGI:98958">
    <property type="gene designation" value="Wnt5a"/>
</dbReference>
<dbReference type="VEuPathDB" id="HostDB:ENSMUSG00000021994"/>
<dbReference type="eggNOG" id="KOG3913">
    <property type="taxonomic scope" value="Eukaryota"/>
</dbReference>
<dbReference type="GeneTree" id="ENSGT00940000158894"/>
<dbReference type="HOGENOM" id="CLU_033039_0_1_1"/>
<dbReference type="InParanoid" id="P22725"/>
<dbReference type="OMA" id="ELNSCGC"/>
<dbReference type="OrthoDB" id="5945655at2759"/>
<dbReference type="PhylomeDB" id="P22725"/>
<dbReference type="TreeFam" id="TF105310"/>
<dbReference type="Reactome" id="R-MMU-201681">
    <property type="pathway name" value="TCF dependent signaling in response to WNT"/>
</dbReference>
<dbReference type="Reactome" id="R-MMU-3238698">
    <property type="pathway name" value="WNT ligand biogenesis and trafficking"/>
</dbReference>
<dbReference type="Reactome" id="R-MMU-4086398">
    <property type="pathway name" value="Ca2+ pathway"/>
</dbReference>
<dbReference type="Reactome" id="R-MMU-4086400">
    <property type="pathway name" value="PCP/CE pathway"/>
</dbReference>
<dbReference type="Reactome" id="R-MMU-4608870">
    <property type="pathway name" value="Asymmetric localization of PCP proteins"/>
</dbReference>
<dbReference type="Reactome" id="R-MMU-5099900">
    <property type="pathway name" value="WNT5A-dependent internalization of FZD4"/>
</dbReference>
<dbReference type="Reactome" id="R-MMU-5140745">
    <property type="pathway name" value="WNT5A-dependent internalization of FZD2, FZD5 and ROR2"/>
</dbReference>
<dbReference type="Reactome" id="R-MMU-8856825">
    <property type="pathway name" value="Cargo recognition for clathrin-mediated endocytosis"/>
</dbReference>
<dbReference type="Reactome" id="R-MMU-8856828">
    <property type="pathway name" value="Clathrin-mediated endocytosis"/>
</dbReference>
<dbReference type="BioGRID-ORCS" id="22418">
    <property type="hits" value="0 hits in 79 CRISPR screens"/>
</dbReference>
<dbReference type="ChiTaRS" id="Wnt5a">
    <property type="organism name" value="mouse"/>
</dbReference>
<dbReference type="PRO" id="PR:P22725"/>
<dbReference type="Proteomes" id="UP000000589">
    <property type="component" value="Chromosome 14"/>
</dbReference>
<dbReference type="RNAct" id="P22725">
    <property type="molecule type" value="protein"/>
</dbReference>
<dbReference type="Bgee" id="ENSMUSG00000021994">
    <property type="expression patterns" value="Expressed in embryonic post-anal tail and 336 other cell types or tissues"/>
</dbReference>
<dbReference type="GO" id="GO:0009986">
    <property type="term" value="C:cell surface"/>
    <property type="evidence" value="ECO:0000314"/>
    <property type="project" value="BHF-UCL"/>
</dbReference>
<dbReference type="GO" id="GO:0005788">
    <property type="term" value="C:endoplasmic reticulum lumen"/>
    <property type="evidence" value="ECO:0000304"/>
    <property type="project" value="Reactome"/>
</dbReference>
<dbReference type="GO" id="GO:0031012">
    <property type="term" value="C:extracellular matrix"/>
    <property type="evidence" value="ECO:0000314"/>
    <property type="project" value="MGI"/>
</dbReference>
<dbReference type="GO" id="GO:0005576">
    <property type="term" value="C:extracellular region"/>
    <property type="evidence" value="ECO:0000304"/>
    <property type="project" value="Reactome"/>
</dbReference>
<dbReference type="GO" id="GO:0005615">
    <property type="term" value="C:extracellular space"/>
    <property type="evidence" value="ECO:0007669"/>
    <property type="project" value="Ensembl"/>
</dbReference>
<dbReference type="GO" id="GO:0098978">
    <property type="term" value="C:glutamatergic synapse"/>
    <property type="evidence" value="ECO:0000314"/>
    <property type="project" value="SynGO"/>
</dbReference>
<dbReference type="GO" id="GO:0098794">
    <property type="term" value="C:postsynapse"/>
    <property type="evidence" value="ECO:0007669"/>
    <property type="project" value="GOC"/>
</dbReference>
<dbReference type="GO" id="GO:0098685">
    <property type="term" value="C:Schaffer collateral - CA1 synapse"/>
    <property type="evidence" value="ECO:0000314"/>
    <property type="project" value="SynGO"/>
</dbReference>
<dbReference type="GO" id="GO:1902379">
    <property type="term" value="F:chemoattractant activity involved in axon guidance"/>
    <property type="evidence" value="ECO:0000314"/>
    <property type="project" value="ParkinsonsUK-UCL"/>
</dbReference>
<dbReference type="GO" id="GO:0005125">
    <property type="term" value="F:cytokine activity"/>
    <property type="evidence" value="ECO:0000314"/>
    <property type="project" value="BHF-UCL"/>
</dbReference>
<dbReference type="GO" id="GO:0005109">
    <property type="term" value="F:frizzled binding"/>
    <property type="evidence" value="ECO:0000314"/>
    <property type="project" value="MGI"/>
</dbReference>
<dbReference type="GO" id="GO:0019904">
    <property type="term" value="F:protein domain specific binding"/>
    <property type="evidence" value="ECO:0000353"/>
    <property type="project" value="UniProtKB"/>
</dbReference>
<dbReference type="GO" id="GO:0005115">
    <property type="term" value="F:receptor tyrosine kinase-like orphan receptor binding"/>
    <property type="evidence" value="ECO:0007669"/>
    <property type="project" value="Ensembl"/>
</dbReference>
<dbReference type="GO" id="GO:0005102">
    <property type="term" value="F:signaling receptor binding"/>
    <property type="evidence" value="ECO:0000353"/>
    <property type="project" value="ParkinsonsUK-UCL"/>
</dbReference>
<dbReference type="GO" id="GO:0090630">
    <property type="term" value="P:activation of GTPase activity"/>
    <property type="evidence" value="ECO:0000314"/>
    <property type="project" value="ParkinsonsUK-UCL"/>
</dbReference>
<dbReference type="GO" id="GO:0009887">
    <property type="term" value="P:animal organ morphogenesis"/>
    <property type="evidence" value="ECO:0000304"/>
    <property type="project" value="MGI"/>
</dbReference>
<dbReference type="GO" id="GO:0008595">
    <property type="term" value="P:anterior/posterior axis specification, embryo"/>
    <property type="evidence" value="ECO:0000314"/>
    <property type="project" value="BHF-UCL"/>
</dbReference>
<dbReference type="GO" id="GO:0009952">
    <property type="term" value="P:anterior/posterior pattern specification"/>
    <property type="evidence" value="ECO:0000315"/>
    <property type="project" value="MGI"/>
</dbReference>
<dbReference type="GO" id="GO:0003283">
    <property type="term" value="P:atrial septum development"/>
    <property type="evidence" value="ECO:0000316"/>
    <property type="project" value="CACAO"/>
</dbReference>
<dbReference type="GO" id="GO:0003401">
    <property type="term" value="P:axis elongation"/>
    <property type="evidence" value="ECO:0000315"/>
    <property type="project" value="MGI"/>
</dbReference>
<dbReference type="GO" id="GO:0048846">
    <property type="term" value="P:axon extension involved in axon guidance"/>
    <property type="evidence" value="ECO:0000316"/>
    <property type="project" value="MGI"/>
</dbReference>
<dbReference type="GO" id="GO:0007411">
    <property type="term" value="P:axon guidance"/>
    <property type="evidence" value="ECO:0000314"/>
    <property type="project" value="UniProtKB"/>
</dbReference>
<dbReference type="GO" id="GO:0007413">
    <property type="term" value="P:axonal fasciculation"/>
    <property type="evidence" value="ECO:0000304"/>
    <property type="project" value="ParkinsonsUK-UCL"/>
</dbReference>
<dbReference type="GO" id="GO:0007409">
    <property type="term" value="P:axonogenesis"/>
    <property type="evidence" value="ECO:0000314"/>
    <property type="project" value="ParkinsonsUK-UCL"/>
</dbReference>
<dbReference type="GO" id="GO:0030509">
    <property type="term" value="P:BMP signaling pathway"/>
    <property type="evidence" value="ECO:0000315"/>
    <property type="project" value="MGI"/>
</dbReference>
<dbReference type="GO" id="GO:0060070">
    <property type="term" value="P:canonical Wnt signaling pathway"/>
    <property type="evidence" value="ECO:0000314"/>
    <property type="project" value="BHF-UCL"/>
</dbReference>
<dbReference type="GO" id="GO:0051216">
    <property type="term" value="P:cartilage development"/>
    <property type="evidence" value="ECO:0007669"/>
    <property type="project" value="UniProtKB-KW"/>
</dbReference>
<dbReference type="GO" id="GO:0016477">
    <property type="term" value="P:cell migration"/>
    <property type="evidence" value="ECO:0000316"/>
    <property type="project" value="MGI"/>
</dbReference>
<dbReference type="GO" id="GO:0008283">
    <property type="term" value="P:cell population proliferation"/>
    <property type="evidence" value="ECO:0000314"/>
    <property type="project" value="MGI"/>
</dbReference>
<dbReference type="GO" id="GO:0007267">
    <property type="term" value="P:cell-cell signaling"/>
    <property type="evidence" value="ECO:0000304"/>
    <property type="project" value="MGI"/>
</dbReference>
<dbReference type="GO" id="GO:0071277">
    <property type="term" value="P:cellular response to calcium ion"/>
    <property type="evidence" value="ECO:0007669"/>
    <property type="project" value="Ensembl"/>
</dbReference>
<dbReference type="GO" id="GO:0071222">
    <property type="term" value="P:cellular response to lipopolysaccharide"/>
    <property type="evidence" value="ECO:0007669"/>
    <property type="project" value="Ensembl"/>
</dbReference>
<dbReference type="GO" id="GO:0071219">
    <property type="term" value="P:cellular response to molecule of bacterial origin"/>
    <property type="evidence" value="ECO:0000314"/>
    <property type="project" value="BHF-UCL"/>
</dbReference>
<dbReference type="GO" id="GO:0071560">
    <property type="term" value="P:cellular response to transforming growth factor beta stimulus"/>
    <property type="evidence" value="ECO:0007669"/>
    <property type="project" value="Ensembl"/>
</dbReference>
<dbReference type="GO" id="GO:0071346">
    <property type="term" value="P:cellular response to type II interferon"/>
    <property type="evidence" value="ECO:0007669"/>
    <property type="project" value="Ensembl"/>
</dbReference>
<dbReference type="GO" id="GO:0060067">
    <property type="term" value="P:cervix development"/>
    <property type="evidence" value="ECO:0000315"/>
    <property type="project" value="MGI"/>
</dbReference>
<dbReference type="GO" id="GO:0036517">
    <property type="term" value="P:chemoattraction of serotonergic neuron axon"/>
    <property type="evidence" value="ECO:0000314"/>
    <property type="project" value="ParkinsonsUK-UCL"/>
</dbReference>
<dbReference type="GO" id="GO:0036518">
    <property type="term" value="P:chemorepulsion of dopaminergic neuron axon"/>
    <property type="evidence" value="ECO:0000314"/>
    <property type="project" value="ParkinsonsUK-UCL"/>
</dbReference>
<dbReference type="GO" id="GO:0090103">
    <property type="term" value="P:cochlea morphogenesis"/>
    <property type="evidence" value="ECO:0000315"/>
    <property type="project" value="MGI"/>
</dbReference>
<dbReference type="GO" id="GO:0060026">
    <property type="term" value="P:convergent extension"/>
    <property type="evidence" value="ECO:0000315"/>
    <property type="project" value="MGI"/>
</dbReference>
<dbReference type="GO" id="GO:0060028">
    <property type="term" value="P:convergent extension involved in axis elongation"/>
    <property type="evidence" value="ECO:0000315"/>
    <property type="project" value="MGI"/>
</dbReference>
<dbReference type="GO" id="GO:0060029">
    <property type="term" value="P:convergent extension involved in organogenesis"/>
    <property type="evidence" value="ECO:0000316"/>
    <property type="project" value="MGI"/>
</dbReference>
<dbReference type="GO" id="GO:0007368">
    <property type="term" value="P:determination of left/right symmetry"/>
    <property type="evidence" value="ECO:0000315"/>
    <property type="project" value="MGI"/>
</dbReference>
<dbReference type="GO" id="GO:0046546">
    <property type="term" value="P:development of primary male sexual characteristics"/>
    <property type="evidence" value="ECO:0000315"/>
    <property type="project" value="MGI"/>
</dbReference>
<dbReference type="GO" id="GO:0048546">
    <property type="term" value="P:digestive tract morphogenesis"/>
    <property type="evidence" value="ECO:0000315"/>
    <property type="project" value="MGI"/>
</dbReference>
<dbReference type="GO" id="GO:0071542">
    <property type="term" value="P:dopaminergic neuron differentiation"/>
    <property type="evidence" value="ECO:0000314"/>
    <property type="project" value="CACAO"/>
</dbReference>
<dbReference type="GO" id="GO:0042733">
    <property type="term" value="P:embryonic digit morphogenesis"/>
    <property type="evidence" value="ECO:0000315"/>
    <property type="project" value="MGI"/>
</dbReference>
<dbReference type="GO" id="GO:0030326">
    <property type="term" value="P:embryonic limb morphogenesis"/>
    <property type="evidence" value="ECO:0000315"/>
    <property type="project" value="MGI"/>
</dbReference>
<dbReference type="GO" id="GO:0048706">
    <property type="term" value="P:embryonic skeletal system development"/>
    <property type="evidence" value="ECO:0007669"/>
    <property type="project" value="Ensembl"/>
</dbReference>
<dbReference type="GO" id="GO:0010631">
    <property type="term" value="P:epithelial cell migration"/>
    <property type="evidence" value="ECO:0000315"/>
    <property type="project" value="MGI"/>
</dbReference>
<dbReference type="GO" id="GO:0050673">
    <property type="term" value="P:epithelial cell proliferation"/>
    <property type="evidence" value="ECO:0000314"/>
    <property type="project" value="MGI"/>
</dbReference>
<dbReference type="GO" id="GO:0060750">
    <property type="term" value="P:epithelial cell proliferation involved in mammary gland duct elongation"/>
    <property type="evidence" value="ECO:0000314"/>
    <property type="project" value="MGI"/>
</dbReference>
<dbReference type="GO" id="GO:0045198">
    <property type="term" value="P:establishment of epithelial cell apical/basal polarity"/>
    <property type="evidence" value="ECO:0000316"/>
    <property type="project" value="MGI"/>
</dbReference>
<dbReference type="GO" id="GO:0001736">
    <property type="term" value="P:establishment of planar polarity"/>
    <property type="evidence" value="ECO:0000315"/>
    <property type="project" value="MGI"/>
</dbReference>
<dbReference type="GO" id="GO:0060324">
    <property type="term" value="P:face development"/>
    <property type="evidence" value="ECO:0007669"/>
    <property type="project" value="Ensembl"/>
</dbReference>
<dbReference type="GO" id="GO:0008543">
    <property type="term" value="P:fibroblast growth factor receptor signaling pathway"/>
    <property type="evidence" value="ECO:0000315"/>
    <property type="project" value="MGI"/>
</dbReference>
<dbReference type="GO" id="GO:0001947">
    <property type="term" value="P:heart looping"/>
    <property type="evidence" value="ECO:0000316"/>
    <property type="project" value="MGI"/>
</dbReference>
<dbReference type="GO" id="GO:0071425">
    <property type="term" value="P:hematopoietic stem cell proliferation"/>
    <property type="evidence" value="ECO:0000314"/>
    <property type="project" value="MGI"/>
</dbReference>
<dbReference type="GO" id="GO:0007442">
    <property type="term" value="P:hindgut morphogenesis"/>
    <property type="evidence" value="ECO:0000315"/>
    <property type="project" value="MGI"/>
</dbReference>
<dbReference type="GO" id="GO:0048850">
    <property type="term" value="P:hypophysis morphogenesis"/>
    <property type="evidence" value="ECO:0000315"/>
    <property type="project" value="MGI"/>
</dbReference>
<dbReference type="GO" id="GO:0006954">
    <property type="term" value="P:inflammatory response"/>
    <property type="evidence" value="ECO:0007669"/>
    <property type="project" value="Ensembl"/>
</dbReference>
<dbReference type="GO" id="GO:0042472">
    <property type="term" value="P:inner ear morphogenesis"/>
    <property type="evidence" value="ECO:0000314"/>
    <property type="project" value="MGI"/>
</dbReference>
<dbReference type="GO" id="GO:0007254">
    <property type="term" value="P:JNK cascade"/>
    <property type="evidence" value="ECO:0000314"/>
    <property type="project" value="MGI"/>
</dbReference>
<dbReference type="GO" id="GO:0030216">
    <property type="term" value="P:keratinocyte differentiation"/>
    <property type="evidence" value="ECO:0007669"/>
    <property type="project" value="Ensembl"/>
</dbReference>
<dbReference type="GO" id="GO:0001822">
    <property type="term" value="P:kidney development"/>
    <property type="evidence" value="ECO:0000315"/>
    <property type="project" value="MGI"/>
</dbReference>
<dbReference type="GO" id="GO:0060599">
    <property type="term" value="P:lateral sprouting involved in mammary gland duct morphogenesis"/>
    <property type="evidence" value="ECO:0000314"/>
    <property type="project" value="MGI"/>
</dbReference>
<dbReference type="GO" id="GO:0035108">
    <property type="term" value="P:limb morphogenesis"/>
    <property type="evidence" value="ECO:0000315"/>
    <property type="project" value="MGI"/>
</dbReference>
<dbReference type="GO" id="GO:0030324">
    <property type="term" value="P:lung development"/>
    <property type="evidence" value="ECO:0000315"/>
    <property type="project" value="MGI"/>
</dbReference>
<dbReference type="GO" id="GO:0010742">
    <property type="term" value="P:macrophage derived foam cell differentiation"/>
    <property type="evidence" value="ECO:0007669"/>
    <property type="project" value="Ensembl"/>
</dbReference>
<dbReference type="GO" id="GO:0008584">
    <property type="term" value="P:male gonad development"/>
    <property type="evidence" value="ECO:0000315"/>
    <property type="project" value="MGI"/>
</dbReference>
<dbReference type="GO" id="GO:0060744">
    <property type="term" value="P:mammary gland branching involved in thelarche"/>
    <property type="evidence" value="ECO:0000314"/>
    <property type="project" value="MGI"/>
</dbReference>
<dbReference type="GO" id="GO:0140013">
    <property type="term" value="P:meiotic nuclear division"/>
    <property type="evidence" value="ECO:0000316"/>
    <property type="project" value="MGI"/>
</dbReference>
<dbReference type="GO" id="GO:0097325">
    <property type="term" value="P:melanocyte proliferation"/>
    <property type="evidence" value="ECO:0000314"/>
    <property type="project" value="CACAO"/>
</dbReference>
<dbReference type="GO" id="GO:0010463">
    <property type="term" value="P:mesenchymal cell proliferation"/>
    <property type="evidence" value="ECO:0000315"/>
    <property type="project" value="MGI"/>
</dbReference>
<dbReference type="GO" id="GO:0060638">
    <property type="term" value="P:mesenchymal-epithelial cell signaling"/>
    <property type="evidence" value="ECO:0000315"/>
    <property type="project" value="MGI"/>
</dbReference>
<dbReference type="GO" id="GO:0060809">
    <property type="term" value="P:mesodermal to mesenchymal transition involved in gastrulation"/>
    <property type="evidence" value="ECO:0000316"/>
    <property type="project" value="MGI"/>
</dbReference>
<dbReference type="GO" id="GO:0030901">
    <property type="term" value="P:midbrain development"/>
    <property type="evidence" value="ECO:0000314"/>
    <property type="project" value="ParkinsonsUK-UCL"/>
</dbReference>
<dbReference type="GO" id="GO:1904948">
    <property type="term" value="P:midbrain dopaminergic neuron differentiation"/>
    <property type="evidence" value="ECO:0000314"/>
    <property type="project" value="ParkinsonsUK-UCL"/>
</dbReference>
<dbReference type="GO" id="GO:0007494">
    <property type="term" value="P:midgut development"/>
    <property type="evidence" value="ECO:0000315"/>
    <property type="project" value="MGI"/>
</dbReference>
<dbReference type="GO" id="GO:0002009">
    <property type="term" value="P:morphogenesis of an epithelium"/>
    <property type="evidence" value="ECO:0000315"/>
    <property type="project" value="MGI"/>
</dbReference>
<dbReference type="GO" id="GO:0050919">
    <property type="term" value="P:negative chemotaxis"/>
    <property type="evidence" value="ECO:0000316"/>
    <property type="project" value="MGI"/>
</dbReference>
<dbReference type="GO" id="GO:0043066">
    <property type="term" value="P:negative regulation of apoptotic process"/>
    <property type="evidence" value="ECO:0007669"/>
    <property type="project" value="Ensembl"/>
</dbReference>
<dbReference type="GO" id="GO:0048843">
    <property type="term" value="P:negative regulation of axon extension involved in axon guidance"/>
    <property type="evidence" value="ECO:0000316"/>
    <property type="project" value="MGI"/>
</dbReference>
<dbReference type="GO" id="GO:0030514">
    <property type="term" value="P:negative regulation of BMP signaling pathway"/>
    <property type="evidence" value="ECO:0000315"/>
    <property type="project" value="MGI"/>
</dbReference>
<dbReference type="GO" id="GO:0090090">
    <property type="term" value="P:negative regulation of canonical Wnt signaling pathway"/>
    <property type="evidence" value="ECO:0000314"/>
    <property type="project" value="ParkinsonsUK-UCL"/>
</dbReference>
<dbReference type="GO" id="GO:1904934">
    <property type="term" value="P:negative regulation of cell proliferation in midbrain"/>
    <property type="evidence" value="ECO:0000315"/>
    <property type="project" value="ParkinsonsUK-UCL"/>
</dbReference>
<dbReference type="GO" id="GO:0045892">
    <property type="term" value="P:negative regulation of DNA-templated transcription"/>
    <property type="evidence" value="ECO:0007669"/>
    <property type="project" value="Ensembl"/>
</dbReference>
<dbReference type="GO" id="GO:0050680">
    <property type="term" value="P:negative regulation of epithelial cell proliferation"/>
    <property type="evidence" value="ECO:0000314"/>
    <property type="project" value="MGI"/>
</dbReference>
<dbReference type="GO" id="GO:0045599">
    <property type="term" value="P:negative regulation of fat cell differentiation"/>
    <property type="evidence" value="ECO:0007669"/>
    <property type="project" value="Ensembl"/>
</dbReference>
<dbReference type="GO" id="GO:0040037">
    <property type="term" value="P:negative regulation of fibroblast growth factor receptor signaling pathway"/>
    <property type="evidence" value="ECO:0000315"/>
    <property type="project" value="MGI"/>
</dbReference>
<dbReference type="GO" id="GO:0048022">
    <property type="term" value="P:negative regulation of melanin biosynthetic process"/>
    <property type="evidence" value="ECO:0000314"/>
    <property type="project" value="CACAO"/>
</dbReference>
<dbReference type="GO" id="GO:0072201">
    <property type="term" value="P:negative regulation of mesenchymal cell proliferation"/>
    <property type="evidence" value="ECO:0007669"/>
    <property type="project" value="Ensembl"/>
</dbReference>
<dbReference type="GO" id="GO:0060686">
    <property type="term" value="P:negative regulation of prostatic bud formation"/>
    <property type="evidence" value="ECO:0000315"/>
    <property type="project" value="MGI"/>
</dbReference>
<dbReference type="GO" id="GO:0051964">
    <property type="term" value="P:negative regulation of synapse assembly"/>
    <property type="evidence" value="ECO:0000314"/>
    <property type="project" value="BHF-UCL"/>
</dbReference>
<dbReference type="GO" id="GO:0001843">
    <property type="term" value="P:neural tube closure"/>
    <property type="evidence" value="ECO:0000316"/>
    <property type="project" value="MGI"/>
</dbReference>
<dbReference type="GO" id="GO:0021915">
    <property type="term" value="P:neural tube development"/>
    <property type="evidence" value="ECO:0000316"/>
    <property type="project" value="MGI"/>
</dbReference>
<dbReference type="GO" id="GO:0022008">
    <property type="term" value="P:neurogenesis"/>
    <property type="evidence" value="ECO:0000314"/>
    <property type="project" value="ParkinsonsUK-UCL"/>
</dbReference>
<dbReference type="GO" id="GO:0048812">
    <property type="term" value="P:neuron projection morphogenesis"/>
    <property type="evidence" value="ECO:0000314"/>
    <property type="project" value="UniProtKB"/>
</dbReference>
<dbReference type="GO" id="GO:0035567">
    <property type="term" value="P:non-canonical Wnt signaling pathway"/>
    <property type="evidence" value="ECO:0000314"/>
    <property type="project" value="ParkinsonsUK-UCL"/>
</dbReference>
<dbReference type="GO" id="GO:0048570">
    <property type="term" value="P:notochord morphogenesis"/>
    <property type="evidence" value="ECO:0000316"/>
    <property type="project" value="MGI"/>
</dbReference>
<dbReference type="GO" id="GO:0021891">
    <property type="term" value="P:olfactory bulb interneuron development"/>
    <property type="evidence" value="ECO:0000315"/>
    <property type="project" value="UniProtKB"/>
</dbReference>
<dbReference type="GO" id="GO:0048341">
    <property type="term" value="P:paraxial mesoderm formation"/>
    <property type="evidence" value="ECO:0000316"/>
    <property type="project" value="MGI"/>
</dbReference>
<dbReference type="GO" id="GO:0003344">
    <property type="term" value="P:pericardium morphogenesis"/>
    <property type="evidence" value="ECO:0000316"/>
    <property type="project" value="MGI"/>
</dbReference>
<dbReference type="GO" id="GO:0007200">
    <property type="term" value="P:phospholipase C-activating G protein-coupled receptor signaling pathway"/>
    <property type="evidence" value="ECO:0007669"/>
    <property type="project" value="Ensembl"/>
</dbReference>
<dbReference type="GO" id="GO:0045766">
    <property type="term" value="P:positive regulation of angiogenesis"/>
    <property type="evidence" value="ECO:0007669"/>
    <property type="project" value="Ensembl"/>
</dbReference>
<dbReference type="GO" id="GO:2001235">
    <property type="term" value="P:positive regulation of apoptotic signaling pathway"/>
    <property type="evidence" value="ECO:0000314"/>
    <property type="project" value="ARUK-UCL"/>
</dbReference>
<dbReference type="GO" id="GO:0061036">
    <property type="term" value="P:positive regulation of cartilage development"/>
    <property type="evidence" value="ECO:0000314"/>
    <property type="project" value="MGI"/>
</dbReference>
<dbReference type="GO" id="GO:2000049">
    <property type="term" value="P:positive regulation of cell-cell adhesion mediated by cadherin"/>
    <property type="evidence" value="ECO:0000314"/>
    <property type="project" value="MGI"/>
</dbReference>
<dbReference type="GO" id="GO:0032722">
    <property type="term" value="P:positive regulation of chemokine production"/>
    <property type="evidence" value="ECO:0007669"/>
    <property type="project" value="Ensembl"/>
</dbReference>
<dbReference type="GO" id="GO:0001819">
    <property type="term" value="P:positive regulation of cytokine production"/>
    <property type="evidence" value="ECO:0000314"/>
    <property type="project" value="MGI"/>
</dbReference>
<dbReference type="GO" id="GO:0045893">
    <property type="term" value="P:positive regulation of DNA-templated transcription"/>
    <property type="evidence" value="ECO:0000314"/>
    <property type="project" value="BHF-UCL"/>
</dbReference>
<dbReference type="GO" id="GO:0045807">
    <property type="term" value="P:positive regulation of endocytosis"/>
    <property type="evidence" value="ECO:0000314"/>
    <property type="project" value="MGI"/>
</dbReference>
<dbReference type="GO" id="GO:0010595">
    <property type="term" value="P:positive regulation of endothelial cell migration"/>
    <property type="evidence" value="ECO:0007669"/>
    <property type="project" value="Ensembl"/>
</dbReference>
<dbReference type="GO" id="GO:0001938">
    <property type="term" value="P:positive regulation of endothelial cell proliferation"/>
    <property type="evidence" value="ECO:0007669"/>
    <property type="project" value="Ensembl"/>
</dbReference>
<dbReference type="GO" id="GO:0050679">
    <property type="term" value="P:positive regulation of epithelial cell proliferation"/>
    <property type="evidence" value="ECO:0000315"/>
    <property type="project" value="MGI"/>
</dbReference>
<dbReference type="GO" id="GO:0048146">
    <property type="term" value="P:positive regulation of fibroblast proliferation"/>
    <property type="evidence" value="ECO:0007669"/>
    <property type="project" value="Ensembl"/>
</dbReference>
<dbReference type="GO" id="GO:0010628">
    <property type="term" value="P:positive regulation of gene expression"/>
    <property type="evidence" value="ECO:0000315"/>
    <property type="project" value="ARUK-UCL"/>
</dbReference>
<dbReference type="GO" id="GO:0043547">
    <property type="term" value="P:positive regulation of GTPase activity"/>
    <property type="evidence" value="ECO:0000314"/>
    <property type="project" value="ParkinsonsUK-UCL"/>
</dbReference>
<dbReference type="GO" id="GO:1902035">
    <property type="term" value="P:positive regulation of hematopoietic stem cell proliferation"/>
    <property type="evidence" value="ECO:0000314"/>
    <property type="project" value="MGI"/>
</dbReference>
<dbReference type="GO" id="GO:0050729">
    <property type="term" value="P:positive regulation of inflammatory response"/>
    <property type="evidence" value="ECO:0007669"/>
    <property type="project" value="Ensembl"/>
</dbReference>
<dbReference type="GO" id="GO:0032731">
    <property type="term" value="P:positive regulation of interleukin-1 beta production"/>
    <property type="evidence" value="ECO:0000314"/>
    <property type="project" value="BHF-UCL"/>
</dbReference>
<dbReference type="GO" id="GO:0032755">
    <property type="term" value="P:positive regulation of interleukin-6 production"/>
    <property type="evidence" value="ECO:0000314"/>
    <property type="project" value="BHF-UCL"/>
</dbReference>
<dbReference type="GO" id="GO:0032757">
    <property type="term" value="P:positive regulation of interleukin-8 production"/>
    <property type="evidence" value="ECO:0000314"/>
    <property type="project" value="BHF-UCL"/>
</dbReference>
<dbReference type="GO" id="GO:0046330">
    <property type="term" value="P:positive regulation of JNK cascade"/>
    <property type="evidence" value="ECO:0000315"/>
    <property type="project" value="BHF-UCL"/>
</dbReference>
<dbReference type="GO" id="GO:0043032">
    <property type="term" value="P:positive regulation of macrophage activation"/>
    <property type="evidence" value="ECO:0007669"/>
    <property type="project" value="Ensembl"/>
</dbReference>
<dbReference type="GO" id="GO:0060907">
    <property type="term" value="P:positive regulation of macrophage cytokine production"/>
    <property type="evidence" value="ECO:0007669"/>
    <property type="project" value="Ensembl"/>
</dbReference>
<dbReference type="GO" id="GO:0045836">
    <property type="term" value="P:positive regulation of meiotic nuclear division"/>
    <property type="evidence" value="ECO:0000316"/>
    <property type="project" value="MGI"/>
</dbReference>
<dbReference type="GO" id="GO:0002053">
    <property type="term" value="P:positive regulation of mesenchymal cell proliferation"/>
    <property type="evidence" value="ECO:0000315"/>
    <property type="project" value="MGI"/>
</dbReference>
<dbReference type="GO" id="GO:0150012">
    <property type="term" value="P:positive regulation of neuron projection arborization"/>
    <property type="evidence" value="ECO:0000316"/>
    <property type="project" value="ARUK-UCL"/>
</dbReference>
<dbReference type="GO" id="GO:0010976">
    <property type="term" value="P:positive regulation of neuron projection development"/>
    <property type="evidence" value="ECO:0000314"/>
    <property type="project" value="UniProtKB"/>
</dbReference>
<dbReference type="GO" id="GO:2000052">
    <property type="term" value="P:positive regulation of non-canonical Wnt signaling pathway"/>
    <property type="evidence" value="ECO:0000314"/>
    <property type="project" value="CACAO"/>
</dbReference>
<dbReference type="GO" id="GO:0045778">
    <property type="term" value="P:positive regulation of ossification"/>
    <property type="evidence" value="ECO:0007669"/>
    <property type="project" value="Ensembl"/>
</dbReference>
<dbReference type="GO" id="GO:0032092">
    <property type="term" value="P:positive regulation of protein binding"/>
    <property type="evidence" value="ECO:0000314"/>
    <property type="project" value="ParkinsonsUK-UCL"/>
</dbReference>
<dbReference type="GO" id="GO:0045732">
    <property type="term" value="P:positive regulation of protein catabolic process"/>
    <property type="evidence" value="ECO:0000266"/>
    <property type="project" value="MGI"/>
</dbReference>
<dbReference type="GO" id="GO:2000648">
    <property type="term" value="P:positive regulation of stem cell proliferation"/>
    <property type="evidence" value="ECO:0000315"/>
    <property type="project" value="MGI"/>
</dbReference>
<dbReference type="GO" id="GO:0010820">
    <property type="term" value="P:positive regulation of T cell chemotaxis"/>
    <property type="evidence" value="ECO:0007669"/>
    <property type="project" value="Ensembl"/>
</dbReference>
<dbReference type="GO" id="GO:0070245">
    <property type="term" value="P:positive regulation of thymocyte apoptotic process"/>
    <property type="evidence" value="ECO:0000315"/>
    <property type="project" value="MGI"/>
</dbReference>
<dbReference type="GO" id="GO:0051885">
    <property type="term" value="P:positive regulation of timing of anagen"/>
    <property type="evidence" value="ECO:0000314"/>
    <property type="project" value="CAFA"/>
</dbReference>
<dbReference type="GO" id="GO:0045944">
    <property type="term" value="P:positive regulation of transcription by RNA polymerase II"/>
    <property type="evidence" value="ECO:0007669"/>
    <property type="project" value="Ensembl"/>
</dbReference>
<dbReference type="GO" id="GO:0032760">
    <property type="term" value="P:positive regulation of tumor necrosis factor production"/>
    <property type="evidence" value="ECO:0000315"/>
    <property type="project" value="ARUK-UCL"/>
</dbReference>
<dbReference type="GO" id="GO:0060340">
    <property type="term" value="P:positive regulation of type I interferon-mediated signaling pathway"/>
    <property type="evidence" value="ECO:0007669"/>
    <property type="project" value="Ensembl"/>
</dbReference>
<dbReference type="GO" id="GO:0032729">
    <property type="term" value="P:positive regulation of type II interferon production"/>
    <property type="evidence" value="ECO:0000315"/>
    <property type="project" value="BHF-UCL"/>
</dbReference>
<dbReference type="GO" id="GO:0036342">
    <property type="term" value="P:post-anal tail morphogenesis"/>
    <property type="evidence" value="ECO:0000315"/>
    <property type="project" value="MGI"/>
</dbReference>
<dbReference type="GO" id="GO:0099170">
    <property type="term" value="P:postsynaptic modulation of chemical synaptic transmission"/>
    <property type="evidence" value="ECO:0000314"/>
    <property type="project" value="SynGO"/>
</dbReference>
<dbReference type="GO" id="GO:0003138">
    <property type="term" value="P:primary heart field specification"/>
    <property type="evidence" value="ECO:0000316"/>
    <property type="project" value="CACAO"/>
</dbReference>
<dbReference type="GO" id="GO:0090009">
    <property type="term" value="P:primitive streak formation"/>
    <property type="evidence" value="ECO:0000316"/>
    <property type="project" value="MGI"/>
</dbReference>
<dbReference type="GO" id="GO:0008104">
    <property type="term" value="P:protein localization"/>
    <property type="evidence" value="ECO:0000315"/>
    <property type="project" value="MGI"/>
</dbReference>
<dbReference type="GO" id="GO:0060762">
    <property type="term" value="P:regulation of branching involved in mammary gland duct morphogenesis"/>
    <property type="evidence" value="ECO:0000314"/>
    <property type="project" value="MGI"/>
</dbReference>
<dbReference type="GO" id="GO:0043122">
    <property type="term" value="P:regulation of canonical NF-kappaB signal transduction"/>
    <property type="evidence" value="ECO:0000315"/>
    <property type="project" value="ARUK-UCL"/>
</dbReference>
<dbReference type="GO" id="GO:0099175">
    <property type="term" value="P:regulation of postsynapse organization"/>
    <property type="evidence" value="ECO:0007669"/>
    <property type="project" value="Ensembl"/>
</dbReference>
<dbReference type="GO" id="GO:0099566">
    <property type="term" value="P:regulation of postsynaptic cytosolic calcium ion concentration"/>
    <property type="evidence" value="ECO:0007669"/>
    <property type="project" value="Ensembl"/>
</dbReference>
<dbReference type="GO" id="GO:0032880">
    <property type="term" value="P:regulation of protein localization"/>
    <property type="evidence" value="ECO:0000314"/>
    <property type="project" value="ParkinsonsUK-UCL"/>
</dbReference>
<dbReference type="GO" id="GO:0003139">
    <property type="term" value="P:secondary heart field specification"/>
    <property type="evidence" value="ECO:0000316"/>
    <property type="project" value="CACAO"/>
</dbReference>
<dbReference type="GO" id="GO:0062009">
    <property type="term" value="P:secondary palate development"/>
    <property type="evidence" value="ECO:0007669"/>
    <property type="project" value="Ensembl"/>
</dbReference>
<dbReference type="GO" id="GO:0007165">
    <property type="term" value="P:signal transduction"/>
    <property type="evidence" value="ECO:0000304"/>
    <property type="project" value="MGI"/>
</dbReference>
<dbReference type="GO" id="GO:0061053">
    <property type="term" value="P:somite development"/>
    <property type="evidence" value="ECO:0000316"/>
    <property type="project" value="MGI"/>
</dbReference>
<dbReference type="GO" id="GO:0001756">
    <property type="term" value="P:somitogenesis"/>
    <property type="evidence" value="ECO:0000316"/>
    <property type="project" value="MGI"/>
</dbReference>
<dbReference type="GO" id="GO:0072089">
    <property type="term" value="P:stem cell proliferation"/>
    <property type="evidence" value="ECO:0000315"/>
    <property type="project" value="MGI"/>
</dbReference>
<dbReference type="GO" id="GO:0070242">
    <property type="term" value="P:thymocyte apoptotic process"/>
    <property type="evidence" value="ECO:0000315"/>
    <property type="project" value="MGI"/>
</dbReference>
<dbReference type="GO" id="GO:0060606">
    <property type="term" value="P:tube closure"/>
    <property type="evidence" value="ECO:0000315"/>
    <property type="project" value="MGI"/>
</dbReference>
<dbReference type="GO" id="GO:0003323">
    <property type="term" value="P:type B pancreatic cell development"/>
    <property type="evidence" value="ECO:0000315"/>
    <property type="project" value="MGI"/>
</dbReference>
<dbReference type="GO" id="GO:0060157">
    <property type="term" value="P:urinary bladder development"/>
    <property type="evidence" value="ECO:0000315"/>
    <property type="project" value="MGI"/>
</dbReference>
<dbReference type="GO" id="GO:0060065">
    <property type="term" value="P:uterus development"/>
    <property type="evidence" value="ECO:0000315"/>
    <property type="project" value="MGI"/>
</dbReference>
<dbReference type="GO" id="GO:0060068">
    <property type="term" value="P:vagina development"/>
    <property type="evidence" value="ECO:0000315"/>
    <property type="project" value="MGI"/>
</dbReference>
<dbReference type="GO" id="GO:0003281">
    <property type="term" value="P:ventricular septum development"/>
    <property type="evidence" value="ECO:0000316"/>
    <property type="project" value="CACAO"/>
</dbReference>
<dbReference type="GO" id="GO:0016055">
    <property type="term" value="P:Wnt signaling pathway"/>
    <property type="evidence" value="ECO:0000315"/>
    <property type="project" value="ARUK-UCL"/>
</dbReference>
<dbReference type="GO" id="GO:0007223">
    <property type="term" value="P:Wnt signaling pathway, calcium modulating pathway"/>
    <property type="evidence" value="ECO:0000314"/>
    <property type="project" value="BHF-UCL"/>
</dbReference>
<dbReference type="GO" id="GO:0060071">
    <property type="term" value="P:Wnt signaling pathway, planar cell polarity pathway"/>
    <property type="evidence" value="ECO:0000314"/>
    <property type="project" value="MGI"/>
</dbReference>
<dbReference type="GO" id="GO:0042060">
    <property type="term" value="P:wound healing"/>
    <property type="evidence" value="ECO:0007669"/>
    <property type="project" value="Ensembl"/>
</dbReference>
<dbReference type="CDD" id="cd19347">
    <property type="entry name" value="Wnt_Wnt5a"/>
    <property type="match status" value="1"/>
</dbReference>
<dbReference type="FunFam" id="3.30.2460.20:FF:000001">
    <property type="entry name" value="Wnt homolog"/>
    <property type="match status" value="1"/>
</dbReference>
<dbReference type="Gene3D" id="3.30.2460.20">
    <property type="match status" value="1"/>
</dbReference>
<dbReference type="InterPro" id="IPR005817">
    <property type="entry name" value="Wnt"/>
</dbReference>
<dbReference type="InterPro" id="IPR043158">
    <property type="entry name" value="Wnt_C"/>
</dbReference>
<dbReference type="InterPro" id="IPR018161">
    <property type="entry name" value="Wnt_CS"/>
</dbReference>
<dbReference type="PANTHER" id="PTHR12027:SF33">
    <property type="entry name" value="PROTEIN WNT-5A"/>
    <property type="match status" value="1"/>
</dbReference>
<dbReference type="PANTHER" id="PTHR12027">
    <property type="entry name" value="WNT RELATED"/>
    <property type="match status" value="1"/>
</dbReference>
<dbReference type="Pfam" id="PF00110">
    <property type="entry name" value="wnt"/>
    <property type="match status" value="1"/>
</dbReference>
<dbReference type="PRINTS" id="PR01349">
    <property type="entry name" value="WNTPROTEIN"/>
</dbReference>
<dbReference type="SMART" id="SM00097">
    <property type="entry name" value="WNT1"/>
    <property type="match status" value="1"/>
</dbReference>
<dbReference type="PROSITE" id="PS00246">
    <property type="entry name" value="WNT1"/>
    <property type="match status" value="1"/>
</dbReference>
<keyword id="KW-0025">Alternative splicing</keyword>
<keyword id="KW-0891">Chondrogenesis</keyword>
<keyword id="KW-0217">Developmental protein</keyword>
<keyword id="KW-0221">Differentiation</keyword>
<keyword id="KW-0903">Direct protein sequencing</keyword>
<keyword id="KW-1015">Disulfide bond</keyword>
<keyword id="KW-0272">Extracellular matrix</keyword>
<keyword id="KW-0325">Glycoprotein</keyword>
<keyword id="KW-0449">Lipoprotein</keyword>
<keyword id="KW-1185">Reference proteome</keyword>
<keyword id="KW-0964">Secreted</keyword>
<keyword id="KW-0732">Signal</keyword>
<keyword id="KW-0879">Wnt signaling pathway</keyword>
<proteinExistence type="evidence at protein level"/>
<evidence type="ECO:0000250" key="1">
    <source>
        <dbReference type="UniProtKB" id="P27467"/>
    </source>
</evidence>
<evidence type="ECO:0000250" key="2">
    <source>
        <dbReference type="UniProtKB" id="P28026"/>
    </source>
</evidence>
<evidence type="ECO:0000250" key="3">
    <source>
        <dbReference type="UniProtKB" id="P41221"/>
    </source>
</evidence>
<evidence type="ECO:0000250" key="4">
    <source>
        <dbReference type="UniProtKB" id="P56704"/>
    </source>
</evidence>
<evidence type="ECO:0000250" key="5">
    <source>
        <dbReference type="UniProtKB" id="Q27Q52"/>
    </source>
</evidence>
<evidence type="ECO:0000255" key="6"/>
<evidence type="ECO:0000269" key="7">
    <source>
    </source>
</evidence>
<evidence type="ECO:0000269" key="8">
    <source>
    </source>
</evidence>
<evidence type="ECO:0000269" key="9">
    <source>
    </source>
</evidence>
<evidence type="ECO:0000269" key="10">
    <source>
    </source>
</evidence>
<evidence type="ECO:0000269" key="11">
    <source>
    </source>
</evidence>
<evidence type="ECO:0000269" key="12">
    <source>
    </source>
</evidence>
<evidence type="ECO:0000269" key="13">
    <source>
    </source>
</evidence>
<evidence type="ECO:0000269" key="14">
    <source>
    </source>
</evidence>
<evidence type="ECO:0000303" key="15">
    <source>
    </source>
</evidence>
<evidence type="ECO:0000305" key="16"/>
<name>WNT5A_MOUSE</name>
<sequence length="380" mass="42309">MKKPIGILSPGVALGTAGGAMSSKFFLMALATFFSFAQVVIEANSWWSLGMNNPVQMSEVYIIGAQPLCSQLAGLSQGQKKLCHLYQDHMQYIGEGAKTGIKECQYQFRHRRWNCSTVDNTSVFGRVMQIGSRETAFTYAVSAAGVVNAMSRACREGELSTCGCSRAARPKDLPRDWLWGGCGDNIDYGYRFAKEFVDARERERIHAKGSYESARILMNLHNNEAGRRTVYNLADVACKCHGVSGSCSLKTCWLQLADFRKVGDALKEKYDSAAAMRLNSRGKLVQVNSRFNSPTTQDLVYIDPSPDYCVRNESTGSLGTQGRLCNKTSEGMDGCELMCCGRGYDQFKTVQTERCHCKFHWCCYVKCKKCTEIVDQFVCK</sequence>
<gene>
    <name type="primary">Wnt5a</name>
    <name type="synonym">Wnt-5a</name>
</gene>
<organism>
    <name type="scientific">Mus musculus</name>
    <name type="common">Mouse</name>
    <dbReference type="NCBI Taxonomy" id="10090"/>
    <lineage>
        <taxon>Eukaryota</taxon>
        <taxon>Metazoa</taxon>
        <taxon>Chordata</taxon>
        <taxon>Craniata</taxon>
        <taxon>Vertebrata</taxon>
        <taxon>Euteleostomi</taxon>
        <taxon>Mammalia</taxon>
        <taxon>Eutheria</taxon>
        <taxon>Euarchontoglires</taxon>
        <taxon>Glires</taxon>
        <taxon>Rodentia</taxon>
        <taxon>Myomorpha</taxon>
        <taxon>Muroidea</taxon>
        <taxon>Muridae</taxon>
        <taxon>Murinae</taxon>
        <taxon>Mus</taxon>
        <taxon>Mus</taxon>
    </lineage>
</organism>